<dbReference type="EC" id="5.6.2.2" evidence="1"/>
<dbReference type="EMBL" id="BX571857">
    <property type="protein sequence ID" value="CAG43071.1"/>
    <property type="status" value="ALT_INIT"/>
    <property type="molecule type" value="Genomic_DNA"/>
</dbReference>
<dbReference type="RefSeq" id="WP_001837315.1">
    <property type="nucleotide sequence ID" value="NC_002953.3"/>
</dbReference>
<dbReference type="SMR" id="Q6G9K5"/>
<dbReference type="KEGG" id="sas:SAS1294"/>
<dbReference type="HOGENOM" id="CLU_006146_4_1_9"/>
<dbReference type="GO" id="GO:0005694">
    <property type="term" value="C:chromosome"/>
    <property type="evidence" value="ECO:0007669"/>
    <property type="project" value="InterPro"/>
</dbReference>
<dbReference type="GO" id="GO:0005524">
    <property type="term" value="F:ATP binding"/>
    <property type="evidence" value="ECO:0007669"/>
    <property type="project" value="UniProtKB-UniRule"/>
</dbReference>
<dbReference type="GO" id="GO:0003677">
    <property type="term" value="F:DNA binding"/>
    <property type="evidence" value="ECO:0007669"/>
    <property type="project" value="UniProtKB-UniRule"/>
</dbReference>
<dbReference type="GO" id="GO:0034335">
    <property type="term" value="F:DNA negative supercoiling activity"/>
    <property type="evidence" value="ECO:0007669"/>
    <property type="project" value="UniProtKB-ARBA"/>
</dbReference>
<dbReference type="GO" id="GO:0046872">
    <property type="term" value="F:metal ion binding"/>
    <property type="evidence" value="ECO:0007669"/>
    <property type="project" value="UniProtKB-KW"/>
</dbReference>
<dbReference type="GO" id="GO:0007059">
    <property type="term" value="P:chromosome segregation"/>
    <property type="evidence" value="ECO:0007669"/>
    <property type="project" value="UniProtKB-UniRule"/>
</dbReference>
<dbReference type="GO" id="GO:0006265">
    <property type="term" value="P:DNA topological change"/>
    <property type="evidence" value="ECO:0007669"/>
    <property type="project" value="UniProtKB-UniRule"/>
</dbReference>
<dbReference type="CDD" id="cd16928">
    <property type="entry name" value="HATPase_GyrB-like"/>
    <property type="match status" value="1"/>
</dbReference>
<dbReference type="CDD" id="cd00822">
    <property type="entry name" value="TopoII_Trans_DNA_gyrase"/>
    <property type="match status" value="1"/>
</dbReference>
<dbReference type="FunFam" id="3.30.230.10:FF:000005">
    <property type="entry name" value="DNA gyrase subunit B"/>
    <property type="match status" value="1"/>
</dbReference>
<dbReference type="FunFam" id="3.30.565.10:FF:000002">
    <property type="entry name" value="DNA gyrase subunit B"/>
    <property type="match status" value="1"/>
</dbReference>
<dbReference type="FunFam" id="3.40.50.670:FF:000002">
    <property type="entry name" value="DNA gyrase subunit B"/>
    <property type="match status" value="1"/>
</dbReference>
<dbReference type="Gene3D" id="3.30.230.10">
    <property type="match status" value="1"/>
</dbReference>
<dbReference type="Gene3D" id="3.40.50.670">
    <property type="match status" value="1"/>
</dbReference>
<dbReference type="Gene3D" id="3.30.565.10">
    <property type="entry name" value="Histidine kinase-like ATPase, C-terminal domain"/>
    <property type="match status" value="1"/>
</dbReference>
<dbReference type="HAMAP" id="MF_00939">
    <property type="entry name" value="ParE_type2"/>
    <property type="match status" value="1"/>
</dbReference>
<dbReference type="InterPro" id="IPR002288">
    <property type="entry name" value="DNA_gyrase_B_C"/>
</dbReference>
<dbReference type="InterPro" id="IPR036890">
    <property type="entry name" value="HATPase_C_sf"/>
</dbReference>
<dbReference type="InterPro" id="IPR005740">
    <property type="entry name" value="ParE_type2"/>
</dbReference>
<dbReference type="InterPro" id="IPR020568">
    <property type="entry name" value="Ribosomal_Su5_D2-typ_SF"/>
</dbReference>
<dbReference type="InterPro" id="IPR014721">
    <property type="entry name" value="Ribsml_uS5_D2-typ_fold_subgr"/>
</dbReference>
<dbReference type="InterPro" id="IPR001241">
    <property type="entry name" value="Topo_IIA"/>
</dbReference>
<dbReference type="InterPro" id="IPR013760">
    <property type="entry name" value="Topo_IIA-like_dom_sf"/>
</dbReference>
<dbReference type="InterPro" id="IPR000565">
    <property type="entry name" value="Topo_IIA_B"/>
</dbReference>
<dbReference type="InterPro" id="IPR013759">
    <property type="entry name" value="Topo_IIA_B_C"/>
</dbReference>
<dbReference type="InterPro" id="IPR013506">
    <property type="entry name" value="Topo_IIA_bsu_dom2"/>
</dbReference>
<dbReference type="InterPro" id="IPR018522">
    <property type="entry name" value="TopoIIA_CS"/>
</dbReference>
<dbReference type="InterPro" id="IPR006171">
    <property type="entry name" value="TOPRIM_dom"/>
</dbReference>
<dbReference type="NCBIfam" id="TIGR01058">
    <property type="entry name" value="parE_Gpos"/>
    <property type="match status" value="1"/>
</dbReference>
<dbReference type="NCBIfam" id="NF004189">
    <property type="entry name" value="PRK05644.1"/>
    <property type="match status" value="1"/>
</dbReference>
<dbReference type="PANTHER" id="PTHR45866">
    <property type="entry name" value="DNA GYRASE/TOPOISOMERASE SUBUNIT B"/>
    <property type="match status" value="1"/>
</dbReference>
<dbReference type="PANTHER" id="PTHR45866:SF12">
    <property type="entry name" value="DNA TOPOISOMERASE 4 SUBUNIT B"/>
    <property type="match status" value="1"/>
</dbReference>
<dbReference type="Pfam" id="PF00204">
    <property type="entry name" value="DNA_gyraseB"/>
    <property type="match status" value="1"/>
</dbReference>
<dbReference type="Pfam" id="PF00986">
    <property type="entry name" value="DNA_gyraseB_C"/>
    <property type="match status" value="1"/>
</dbReference>
<dbReference type="Pfam" id="PF02518">
    <property type="entry name" value="HATPase_c"/>
    <property type="match status" value="1"/>
</dbReference>
<dbReference type="Pfam" id="PF01751">
    <property type="entry name" value="Toprim"/>
    <property type="match status" value="1"/>
</dbReference>
<dbReference type="PRINTS" id="PR01159">
    <property type="entry name" value="DNAGYRASEB"/>
</dbReference>
<dbReference type="PRINTS" id="PR00418">
    <property type="entry name" value="TPI2FAMILY"/>
</dbReference>
<dbReference type="SMART" id="SM00387">
    <property type="entry name" value="HATPase_c"/>
    <property type="match status" value="1"/>
</dbReference>
<dbReference type="SMART" id="SM00433">
    <property type="entry name" value="TOP2c"/>
    <property type="match status" value="1"/>
</dbReference>
<dbReference type="SUPFAM" id="SSF55874">
    <property type="entry name" value="ATPase domain of HSP90 chaperone/DNA topoisomerase II/histidine kinase"/>
    <property type="match status" value="1"/>
</dbReference>
<dbReference type="SUPFAM" id="SSF54211">
    <property type="entry name" value="Ribosomal protein S5 domain 2-like"/>
    <property type="match status" value="1"/>
</dbReference>
<dbReference type="SUPFAM" id="SSF56719">
    <property type="entry name" value="Type II DNA topoisomerase"/>
    <property type="match status" value="1"/>
</dbReference>
<dbReference type="PROSITE" id="PS00177">
    <property type="entry name" value="TOPOISOMERASE_II"/>
    <property type="match status" value="1"/>
</dbReference>
<dbReference type="PROSITE" id="PS50880">
    <property type="entry name" value="TOPRIM"/>
    <property type="match status" value="1"/>
</dbReference>
<organism>
    <name type="scientific">Staphylococcus aureus (strain MSSA476)</name>
    <dbReference type="NCBI Taxonomy" id="282459"/>
    <lineage>
        <taxon>Bacteria</taxon>
        <taxon>Bacillati</taxon>
        <taxon>Bacillota</taxon>
        <taxon>Bacilli</taxon>
        <taxon>Bacillales</taxon>
        <taxon>Staphylococcaceae</taxon>
        <taxon>Staphylococcus</taxon>
    </lineage>
</organism>
<proteinExistence type="inferred from homology"/>
<reference key="1">
    <citation type="journal article" date="2004" name="Proc. Natl. Acad. Sci. U.S.A.">
        <title>Complete genomes of two clinical Staphylococcus aureus strains: evidence for the rapid evolution of virulence and drug resistance.</title>
        <authorList>
            <person name="Holden M.T.G."/>
            <person name="Feil E.J."/>
            <person name="Lindsay J.A."/>
            <person name="Peacock S.J."/>
            <person name="Day N.P.J."/>
            <person name="Enright M.C."/>
            <person name="Foster T.J."/>
            <person name="Moore C.E."/>
            <person name="Hurst L."/>
            <person name="Atkin R."/>
            <person name="Barron A."/>
            <person name="Bason N."/>
            <person name="Bentley S.D."/>
            <person name="Chillingworth C."/>
            <person name="Chillingworth T."/>
            <person name="Churcher C."/>
            <person name="Clark L."/>
            <person name="Corton C."/>
            <person name="Cronin A."/>
            <person name="Doggett J."/>
            <person name="Dowd L."/>
            <person name="Feltwell T."/>
            <person name="Hance Z."/>
            <person name="Harris B."/>
            <person name="Hauser H."/>
            <person name="Holroyd S."/>
            <person name="Jagels K."/>
            <person name="James K.D."/>
            <person name="Lennard N."/>
            <person name="Line A."/>
            <person name="Mayes R."/>
            <person name="Moule S."/>
            <person name="Mungall K."/>
            <person name="Ormond D."/>
            <person name="Quail M.A."/>
            <person name="Rabbinowitsch E."/>
            <person name="Rutherford K.M."/>
            <person name="Sanders M."/>
            <person name="Sharp S."/>
            <person name="Simmonds M."/>
            <person name="Stevens K."/>
            <person name="Whitehead S."/>
            <person name="Barrell B.G."/>
            <person name="Spratt B.G."/>
            <person name="Parkhill J."/>
        </authorList>
    </citation>
    <scope>NUCLEOTIDE SEQUENCE [LARGE SCALE GENOMIC DNA]</scope>
    <source>
        <strain>MSSA476</strain>
    </source>
</reference>
<name>PARE_STAAS</name>
<accession>Q6G9K5</accession>
<sequence length="663" mass="74422">MNKQNNYSDDSIQVLEGLEAVRKRPGMYIGSTDKRGLHHLVYEIVDNSVDEVLNGYGNEIDVTINKDGSISIEDNGRGMPTGIHKSGKPTVEVIFTVLHAGGKFGQGGYKTSGGLHGVGASVVNALSEWLEVEIHRDGNIYHQSFKNGGSPSSGLVKKGKTKKTGTKVTFKPDDTIFKASTSFNFDVLSERLQESAFLLKNLKITLNDLRSGKERQEHYHYEEGIKEFVSYVNEGKEVLHDVATFSGEANGIEVDVAFQYNDQYSESILSFVNNVRTKDGGTHEVGFKTAMTRVFNDYARRINELKTKDKNLDGNDIREGLTAVVSVRIPEELLQFEGQTKSKLGTSEARSAVDSVVADKLPFYLEEKGQLSKSLVKKAIKAQQAREAARKAREDARSGKKNKRKDTLLSGKLTPAQSKNTEKNELYLVEGDSAGGSAKLGRDRKFQAILPLRGKVINTEKARLEDIFKNEEINTIIHTIGAGVGTDFKIEDSNYNRVIIMTDADTDGAHIQVLLLTFFFKYMKPLVQADRVFIALPPLYKLEKGKGKTKRVEYAWTDEELNKLQKELGKGFTLQRYKGLGEMNPEQLWETTMNPETRTLIRVQVEDEVRSSKRVTTLMGDKVQPRREWIEKHVEFGMQEDQSILDNSEVQVLENDQFDEEEI</sequence>
<feature type="chain" id="PRO_0000145438" description="DNA topoisomerase 4 subunit B">
    <location>
        <begin position="1"/>
        <end position="663"/>
    </location>
</feature>
<feature type="domain" description="Toprim" evidence="1">
    <location>
        <begin position="424"/>
        <end position="538"/>
    </location>
</feature>
<feature type="region of interest" description="Disordered" evidence="2">
    <location>
        <begin position="386"/>
        <end position="416"/>
    </location>
</feature>
<feature type="compositionally biased region" description="Basic and acidic residues" evidence="2">
    <location>
        <begin position="387"/>
        <end position="398"/>
    </location>
</feature>
<feature type="binding site" evidence="1">
    <location>
        <position position="7"/>
    </location>
    <ligand>
        <name>ATP</name>
        <dbReference type="ChEBI" id="CHEBI:30616"/>
    </ligand>
</feature>
<feature type="binding site" evidence="1">
    <location>
        <position position="47"/>
    </location>
    <ligand>
        <name>ATP</name>
        <dbReference type="ChEBI" id="CHEBI:30616"/>
    </ligand>
</feature>
<feature type="binding site" evidence="1">
    <location>
        <position position="74"/>
    </location>
    <ligand>
        <name>ATP</name>
        <dbReference type="ChEBI" id="CHEBI:30616"/>
    </ligand>
</feature>
<feature type="binding site" evidence="1">
    <location>
        <begin position="114"/>
        <end position="120"/>
    </location>
    <ligand>
        <name>ATP</name>
        <dbReference type="ChEBI" id="CHEBI:30616"/>
    </ligand>
</feature>
<feature type="binding site" evidence="1">
    <location>
        <position position="341"/>
    </location>
    <ligand>
        <name>ATP</name>
        <dbReference type="ChEBI" id="CHEBI:30616"/>
    </ligand>
</feature>
<feature type="binding site" evidence="1">
    <location>
        <position position="430"/>
    </location>
    <ligand>
        <name>Mg(2+)</name>
        <dbReference type="ChEBI" id="CHEBI:18420"/>
        <label>1</label>
        <note>catalytic</note>
    </ligand>
</feature>
<feature type="binding site" evidence="1">
    <location>
        <position position="503"/>
    </location>
    <ligand>
        <name>Mg(2+)</name>
        <dbReference type="ChEBI" id="CHEBI:18420"/>
        <label>1</label>
        <note>catalytic</note>
    </ligand>
</feature>
<feature type="binding site" evidence="1">
    <location>
        <position position="503"/>
    </location>
    <ligand>
        <name>Mg(2+)</name>
        <dbReference type="ChEBI" id="CHEBI:18420"/>
        <label>2</label>
    </ligand>
</feature>
<feature type="binding site" evidence="1">
    <location>
        <position position="505"/>
    </location>
    <ligand>
        <name>Mg(2+)</name>
        <dbReference type="ChEBI" id="CHEBI:18420"/>
        <label>2</label>
    </ligand>
</feature>
<feature type="site" description="Interaction with DNA" evidence="1">
    <location>
        <position position="455"/>
    </location>
</feature>
<feature type="site" description="Interaction with DNA" evidence="1">
    <location>
        <position position="458"/>
    </location>
</feature>
<feature type="site" description="Interaction with DNA" evidence="1">
    <location>
        <position position="510"/>
    </location>
</feature>
<feature type="site" description="Interaction with DNA" evidence="1">
    <location>
        <position position="626"/>
    </location>
</feature>
<evidence type="ECO:0000255" key="1">
    <source>
        <dbReference type="HAMAP-Rule" id="MF_00939"/>
    </source>
</evidence>
<evidence type="ECO:0000256" key="2">
    <source>
        <dbReference type="SAM" id="MobiDB-lite"/>
    </source>
</evidence>
<evidence type="ECO:0000305" key="3"/>
<keyword id="KW-0067">ATP-binding</keyword>
<keyword id="KW-0238">DNA-binding</keyword>
<keyword id="KW-0413">Isomerase</keyword>
<keyword id="KW-0460">Magnesium</keyword>
<keyword id="KW-0479">Metal-binding</keyword>
<keyword id="KW-0547">Nucleotide-binding</keyword>
<keyword id="KW-0799">Topoisomerase</keyword>
<gene>
    <name evidence="1" type="primary">parE</name>
    <name type="synonym">grlB</name>
    <name type="ordered locus">SAS1294</name>
</gene>
<comment type="function">
    <text evidence="1">Topoisomerase IV is essential for chromosome segregation. It relaxes supercoiled DNA. Performs the decatenation events required during the replication of a circular DNA molecule.</text>
</comment>
<comment type="catalytic activity">
    <reaction evidence="1">
        <text>ATP-dependent breakage, passage and rejoining of double-stranded DNA.</text>
        <dbReference type="EC" id="5.6.2.2"/>
    </reaction>
</comment>
<comment type="cofactor">
    <cofactor evidence="1">
        <name>Mg(2+)</name>
        <dbReference type="ChEBI" id="CHEBI:18420"/>
    </cofactor>
    <cofactor evidence="1">
        <name>Mn(2+)</name>
        <dbReference type="ChEBI" id="CHEBI:29035"/>
    </cofactor>
    <cofactor evidence="1">
        <name>Ca(2+)</name>
        <dbReference type="ChEBI" id="CHEBI:29108"/>
    </cofactor>
    <text evidence="1">Binds two Mg(2+) per subunit. The magnesium ions form salt bridges with both the protein and the DNA. Can also accept other divalent metal cations, such as Mn(2+) or Ca(2+).</text>
</comment>
<comment type="subunit">
    <text evidence="1">Heterotetramer composed of ParC and ParE.</text>
</comment>
<comment type="similarity">
    <text evidence="1">Belongs to the type II topoisomerase family. ParE type 2 subfamily.</text>
</comment>
<comment type="sequence caution" evidence="3">
    <conflict type="erroneous initiation">
        <sequence resource="EMBL-CDS" id="CAG43071"/>
    </conflict>
</comment>
<protein>
    <recommendedName>
        <fullName evidence="1">DNA topoisomerase 4 subunit B</fullName>
        <ecNumber evidence="1">5.6.2.2</ecNumber>
    </recommendedName>
    <alternativeName>
        <fullName evidence="1">Topoisomerase IV subunit B</fullName>
    </alternativeName>
</protein>